<gene>
    <name type="primary">Tex44</name>
</gene>
<accession>Q5U2Y8</accession>
<sequence length="436" mass="46510">MTTEPLEDPEANSNFVHGLPEASLGNKADENSEDLPGPSEGLDPLPDEVPPEDIVEARAEEDVDQASEANIIATEQDEEQASMQIATSMGQNKDRASMQTDTSTGRDAEPATSMTTSTSGVKEEIPGTPNPSQENLEELTSLLPQDPGILQMFVGFQNPVWDRLAENNRTSRSRTVSPSDSQTQEKTSGKSTVSEGQLEIASNADVPSVLPEDVQTSAGATDPPPSDTTGPEPEPTKSADQEAEDFKALNPESKVRSPKSTSEDLAADSGTPQAPPSPNSPADSPPPSPDSYQVSLGRSRLDPSLYGPEVENDYMRSMTSLLCGGEGSISSLTDILVWSDTATRMGVAMGILASGRSSPADRLQDEGPRLRTVASLFRSARSAFSSGVMAGTSSVLRSVTHLLESVERHTMEGIRSTMRYLNHFTLRWARTGSNSD</sequence>
<feature type="chain" id="PRO_0000309184" description="Testis-expressed protein 44">
    <location>
        <begin position="1"/>
        <end position="436"/>
    </location>
</feature>
<feature type="region of interest" description="Disordered" evidence="2">
    <location>
        <begin position="1"/>
        <end position="142"/>
    </location>
</feature>
<feature type="region of interest" description="Disordered" evidence="2">
    <location>
        <begin position="165"/>
        <end position="307"/>
    </location>
</feature>
<feature type="compositionally biased region" description="Acidic residues" evidence="2">
    <location>
        <begin position="1"/>
        <end position="10"/>
    </location>
</feature>
<feature type="compositionally biased region" description="Acidic residues" evidence="2">
    <location>
        <begin position="45"/>
        <end position="54"/>
    </location>
</feature>
<feature type="compositionally biased region" description="Polar residues" evidence="2">
    <location>
        <begin position="81"/>
        <end position="103"/>
    </location>
</feature>
<feature type="compositionally biased region" description="Polar residues" evidence="2">
    <location>
        <begin position="167"/>
        <end position="195"/>
    </location>
</feature>
<feature type="compositionally biased region" description="Basic and acidic residues" evidence="2">
    <location>
        <begin position="234"/>
        <end position="247"/>
    </location>
</feature>
<feature type="compositionally biased region" description="Pro residues" evidence="2">
    <location>
        <begin position="273"/>
        <end position="289"/>
    </location>
</feature>
<feature type="modified residue" description="Phosphoserine" evidence="3">
    <location>
        <position position="375"/>
    </location>
</feature>
<evidence type="ECO:0000250" key="1">
    <source>
        <dbReference type="UniProtKB" id="Q53QW1"/>
    </source>
</evidence>
<evidence type="ECO:0000256" key="2">
    <source>
        <dbReference type="SAM" id="MobiDB-lite"/>
    </source>
</evidence>
<evidence type="ECO:0007744" key="3">
    <source>
    </source>
</evidence>
<organism>
    <name type="scientific">Rattus norvegicus</name>
    <name type="common">Rat</name>
    <dbReference type="NCBI Taxonomy" id="10116"/>
    <lineage>
        <taxon>Eukaryota</taxon>
        <taxon>Metazoa</taxon>
        <taxon>Chordata</taxon>
        <taxon>Craniata</taxon>
        <taxon>Vertebrata</taxon>
        <taxon>Euteleostomi</taxon>
        <taxon>Mammalia</taxon>
        <taxon>Eutheria</taxon>
        <taxon>Euarchontoglires</taxon>
        <taxon>Glires</taxon>
        <taxon>Rodentia</taxon>
        <taxon>Myomorpha</taxon>
        <taxon>Muroidea</taxon>
        <taxon>Muridae</taxon>
        <taxon>Murinae</taxon>
        <taxon>Rattus</taxon>
    </lineage>
</organism>
<reference key="1">
    <citation type="journal article" date="2004" name="Genome Res.">
        <title>The status, quality, and expansion of the NIH full-length cDNA project: the Mammalian Gene Collection (MGC).</title>
        <authorList>
            <consortium name="The MGC Project Team"/>
        </authorList>
    </citation>
    <scope>NUCLEOTIDE SEQUENCE [LARGE SCALE MRNA]</scope>
    <source>
        <tissue>Testis</tissue>
    </source>
</reference>
<reference key="2">
    <citation type="journal article" date="2012" name="Nat. Commun.">
        <title>Quantitative maps of protein phosphorylation sites across 14 different rat organs and tissues.</title>
        <authorList>
            <person name="Lundby A."/>
            <person name="Secher A."/>
            <person name="Lage K."/>
            <person name="Nordsborg N.B."/>
            <person name="Dmytriyev A."/>
            <person name="Lundby C."/>
            <person name="Olsen J.V."/>
        </authorList>
    </citation>
    <scope>PHOSPHORYLATION [LARGE SCALE ANALYSIS] AT SER-375</scope>
    <scope>IDENTIFICATION BY MASS SPECTROMETRY [LARGE SCALE ANALYSIS]</scope>
</reference>
<name>TEX44_RAT</name>
<dbReference type="EMBL" id="BC085806">
    <property type="protein sequence ID" value="AAH85806.1"/>
    <property type="molecule type" value="mRNA"/>
</dbReference>
<dbReference type="RefSeq" id="NP_001019535.1">
    <property type="nucleotide sequence ID" value="NM_001024364.1"/>
</dbReference>
<dbReference type="FunCoup" id="Q5U2Y8">
    <property type="interactions" value="3"/>
</dbReference>
<dbReference type="STRING" id="10116.ENSRNOP00000025030"/>
<dbReference type="iPTMnet" id="Q5U2Y8"/>
<dbReference type="PhosphoSitePlus" id="Q5U2Y8"/>
<dbReference type="PaxDb" id="10116-ENSRNOP00000025030"/>
<dbReference type="Ensembl" id="ENSRNOT00000025029.5">
    <property type="protein sequence ID" value="ENSRNOP00000025030.4"/>
    <property type="gene ID" value="ENSRNOG00000018559.5"/>
</dbReference>
<dbReference type="GeneID" id="501180"/>
<dbReference type="KEGG" id="rno:501180"/>
<dbReference type="UCSC" id="RGD:1564629">
    <property type="organism name" value="rat"/>
</dbReference>
<dbReference type="AGR" id="RGD:1564629"/>
<dbReference type="CTD" id="165100"/>
<dbReference type="RGD" id="1564629">
    <property type="gene designation" value="Tex44"/>
</dbReference>
<dbReference type="eggNOG" id="ENOG502TDPT">
    <property type="taxonomic scope" value="Eukaryota"/>
</dbReference>
<dbReference type="GeneTree" id="ENSGT00390000009950"/>
<dbReference type="HOGENOM" id="CLU_038692_0_0_1"/>
<dbReference type="InParanoid" id="Q5U2Y8"/>
<dbReference type="OMA" id="MGQDEDQ"/>
<dbReference type="OrthoDB" id="9838056at2759"/>
<dbReference type="PhylomeDB" id="Q5U2Y8"/>
<dbReference type="TreeFam" id="TF338437"/>
<dbReference type="PRO" id="PR:Q5U2Y8"/>
<dbReference type="Proteomes" id="UP000002494">
    <property type="component" value="Chromosome 9"/>
</dbReference>
<dbReference type="Bgee" id="ENSRNOG00000018559">
    <property type="expression patterns" value="Expressed in testis"/>
</dbReference>
<dbReference type="GO" id="GO:0005737">
    <property type="term" value="C:cytoplasm"/>
    <property type="evidence" value="ECO:0000250"/>
    <property type="project" value="UniProtKB"/>
</dbReference>
<dbReference type="InterPro" id="IPR031460">
    <property type="entry name" value="DUF4678"/>
</dbReference>
<dbReference type="PANTHER" id="PTHR37365">
    <property type="entry name" value="TESTIS-EXPRESSED PROTEIN 44"/>
    <property type="match status" value="1"/>
</dbReference>
<dbReference type="PANTHER" id="PTHR37365:SF1">
    <property type="entry name" value="TESTIS-EXPRESSED PROTEIN 44"/>
    <property type="match status" value="1"/>
</dbReference>
<dbReference type="Pfam" id="PF15727">
    <property type="entry name" value="DUF4678"/>
    <property type="match status" value="1"/>
</dbReference>
<keyword id="KW-0963">Cytoplasm</keyword>
<keyword id="KW-0597">Phosphoprotein</keyword>
<keyword id="KW-1185">Reference proteome</keyword>
<comment type="subcellular location">
    <subcellularLocation>
        <location evidence="1">Cytoplasm</location>
    </subcellularLocation>
</comment>
<protein>
    <recommendedName>
        <fullName>Testis-expressed protein 44</fullName>
    </recommendedName>
</protein>
<proteinExistence type="evidence at protein level"/>